<organism>
    <name type="scientific">Saccharomyces cerevisiae (strain ATCC 204508 / S288c)</name>
    <name type="common">Baker's yeast</name>
    <dbReference type="NCBI Taxonomy" id="559292"/>
    <lineage>
        <taxon>Eukaryota</taxon>
        <taxon>Fungi</taxon>
        <taxon>Dikarya</taxon>
        <taxon>Ascomycota</taxon>
        <taxon>Saccharomycotina</taxon>
        <taxon>Saccharomycetes</taxon>
        <taxon>Saccharomycetales</taxon>
        <taxon>Saccharomycetaceae</taxon>
        <taxon>Saccharomyces</taxon>
    </lineage>
</organism>
<feature type="chain" id="PRO_0000101230" description="Signal recognition particle receptor subunit beta">
    <location>
        <begin position="1"/>
        <end position="244"/>
    </location>
</feature>
<feature type="transmembrane region" description="Helical" evidence="3">
    <location>
        <begin position="7"/>
        <end position="23"/>
    </location>
</feature>
<feature type="binding site" evidence="4">
    <location>
        <begin position="45"/>
        <end position="53"/>
    </location>
    <ligand>
        <name>GTP</name>
        <dbReference type="ChEBI" id="CHEBI:37565"/>
    </ligand>
</feature>
<feature type="binding site" evidence="4">
    <location>
        <begin position="66"/>
        <end position="69"/>
    </location>
    <ligand>
        <name>GTP</name>
        <dbReference type="ChEBI" id="CHEBI:37565"/>
    </ligand>
</feature>
<feature type="binding site" evidence="4">
    <location>
        <position position="90"/>
    </location>
    <ligand>
        <name>GTP</name>
        <dbReference type="ChEBI" id="CHEBI:37565"/>
    </ligand>
</feature>
<feature type="binding site" evidence="4">
    <location>
        <begin position="154"/>
        <end position="157"/>
    </location>
    <ligand>
        <name>GTP</name>
        <dbReference type="ChEBI" id="CHEBI:37565"/>
    </ligand>
</feature>
<feature type="strand" evidence="7">
    <location>
        <begin position="40"/>
        <end position="44"/>
    </location>
</feature>
<feature type="helix" evidence="7">
    <location>
        <begin position="51"/>
        <end position="60"/>
    </location>
</feature>
<feature type="strand" evidence="7">
    <location>
        <begin position="73"/>
        <end position="75"/>
    </location>
</feature>
<feature type="helix" evidence="7">
    <location>
        <begin position="78"/>
        <end position="80"/>
    </location>
</feature>
<feature type="strand" evidence="7">
    <location>
        <begin position="84"/>
        <end position="87"/>
    </location>
</feature>
<feature type="helix" evidence="7">
    <location>
        <begin position="92"/>
        <end position="95"/>
    </location>
</feature>
<feature type="helix" evidence="7">
    <location>
        <begin position="96"/>
        <end position="105"/>
    </location>
</feature>
<feature type="helix" evidence="7">
    <location>
        <begin position="106"/>
        <end position="108"/>
    </location>
</feature>
<feature type="strand" evidence="7">
    <location>
        <begin position="109"/>
        <end position="117"/>
    </location>
</feature>
<feature type="helix" evidence="7">
    <location>
        <begin position="126"/>
        <end position="142"/>
    </location>
</feature>
<feature type="strand" evidence="7">
    <location>
        <begin position="149"/>
        <end position="154"/>
    </location>
</feature>
<feature type="helix" evidence="7">
    <location>
        <begin position="164"/>
        <end position="187"/>
    </location>
</feature>
<feature type="helix" evidence="7">
    <location>
        <begin position="214"/>
        <end position="216"/>
    </location>
</feature>
<feature type="strand" evidence="7">
    <location>
        <begin position="217"/>
        <end position="219"/>
    </location>
</feature>
<feature type="strand" evidence="7">
    <location>
        <begin position="221"/>
        <end position="225"/>
    </location>
</feature>
<feature type="turn" evidence="7">
    <location>
        <begin position="228"/>
        <end position="231"/>
    </location>
</feature>
<feature type="helix" evidence="7">
    <location>
        <begin position="234"/>
        <end position="243"/>
    </location>
</feature>
<reference key="1">
    <citation type="journal article" date="1994" name="Yeast">
        <title>DNA sequencing of a 36.2 kb fragment located between the FAS1 and LAP loci of chromosome XI of Saccharomyces cerevisiae.</title>
        <authorList>
            <person name="Vandenbol M."/>
            <person name="Bolle P.-A."/>
            <person name="Dion C."/>
            <person name="Portetelle D."/>
            <person name="Hilger F."/>
        </authorList>
    </citation>
    <scope>NUCLEOTIDE SEQUENCE [GENOMIC DNA]</scope>
    <source>
        <strain>ATCC 204508 / S288c</strain>
    </source>
</reference>
<reference key="2">
    <citation type="journal article" date="1994" name="Nature">
        <title>Complete DNA sequence of yeast chromosome XI.</title>
        <authorList>
            <person name="Dujon B."/>
            <person name="Alexandraki D."/>
            <person name="Andre B."/>
            <person name="Ansorge W."/>
            <person name="Baladron V."/>
            <person name="Ballesta J.P.G."/>
            <person name="Banrevi A."/>
            <person name="Bolle P.-A."/>
            <person name="Bolotin-Fukuhara M."/>
            <person name="Bossier P."/>
            <person name="Bou G."/>
            <person name="Boyer J."/>
            <person name="Buitrago M.J."/>
            <person name="Cheret G."/>
            <person name="Colleaux L."/>
            <person name="Daignan-Fornier B."/>
            <person name="del Rey F."/>
            <person name="Dion C."/>
            <person name="Domdey H."/>
            <person name="Duesterhoeft A."/>
            <person name="Duesterhus S."/>
            <person name="Entian K.-D."/>
            <person name="Erfle H."/>
            <person name="Esteban P.F."/>
            <person name="Feldmann H."/>
            <person name="Fernandes L."/>
            <person name="Fobo G.M."/>
            <person name="Fritz C."/>
            <person name="Fukuhara H."/>
            <person name="Gabel C."/>
            <person name="Gaillon L."/>
            <person name="Garcia-Cantalejo J.M."/>
            <person name="Garcia-Ramirez J.J."/>
            <person name="Gent M.E."/>
            <person name="Ghazvini M."/>
            <person name="Goffeau A."/>
            <person name="Gonzalez A."/>
            <person name="Grothues D."/>
            <person name="Guerreiro P."/>
            <person name="Hegemann J.H."/>
            <person name="Hewitt N."/>
            <person name="Hilger F."/>
            <person name="Hollenberg C.P."/>
            <person name="Horaitis O."/>
            <person name="Indge K.J."/>
            <person name="Jacquier A."/>
            <person name="James C.M."/>
            <person name="Jauniaux J.-C."/>
            <person name="Jimenez A."/>
            <person name="Keuchel H."/>
            <person name="Kirchrath L."/>
            <person name="Kleine K."/>
            <person name="Koetter P."/>
            <person name="Legrain P."/>
            <person name="Liebl S."/>
            <person name="Louis E.J."/>
            <person name="Maia e Silva A."/>
            <person name="Marck C."/>
            <person name="Monnier A.-L."/>
            <person name="Moestl D."/>
            <person name="Mueller S."/>
            <person name="Obermaier B."/>
            <person name="Oliver S.G."/>
            <person name="Pallier C."/>
            <person name="Pascolo S."/>
            <person name="Pfeiffer F."/>
            <person name="Philippsen P."/>
            <person name="Planta R.J."/>
            <person name="Pohl F.M."/>
            <person name="Pohl T.M."/>
            <person name="Poehlmann R."/>
            <person name="Portetelle D."/>
            <person name="Purnelle B."/>
            <person name="Puzos V."/>
            <person name="Ramezani Rad M."/>
            <person name="Rasmussen S.W."/>
            <person name="Remacha M.A."/>
            <person name="Revuelta J.L."/>
            <person name="Richard G.-F."/>
            <person name="Rieger M."/>
            <person name="Rodrigues-Pousada C."/>
            <person name="Rose M."/>
            <person name="Rupp T."/>
            <person name="Santos M.A."/>
            <person name="Schwager C."/>
            <person name="Sensen C."/>
            <person name="Skala J."/>
            <person name="Soares H."/>
            <person name="Sor F."/>
            <person name="Stegemann J."/>
            <person name="Tettelin H."/>
            <person name="Thierry A."/>
            <person name="Tzermia M."/>
            <person name="Urrestarazu L.A."/>
            <person name="van Dyck L."/>
            <person name="van Vliet-Reedijk J.C."/>
            <person name="Valens M."/>
            <person name="Vandenbol M."/>
            <person name="Vilela C."/>
            <person name="Vissers S."/>
            <person name="von Wettstein D."/>
            <person name="Voss H."/>
            <person name="Wiemann S."/>
            <person name="Xu G."/>
            <person name="Zimmermann J."/>
            <person name="Haasemann M."/>
            <person name="Becker I."/>
            <person name="Mewes H.-W."/>
        </authorList>
    </citation>
    <scope>NUCLEOTIDE SEQUENCE [LARGE SCALE GENOMIC DNA]</scope>
    <source>
        <strain>ATCC 204508 / S288c</strain>
    </source>
</reference>
<reference key="3">
    <citation type="journal article" date="2014" name="G3 (Bethesda)">
        <title>The reference genome sequence of Saccharomyces cerevisiae: Then and now.</title>
        <authorList>
            <person name="Engel S.R."/>
            <person name="Dietrich F.S."/>
            <person name="Fisk D.G."/>
            <person name="Binkley G."/>
            <person name="Balakrishnan R."/>
            <person name="Costanzo M.C."/>
            <person name="Dwight S.S."/>
            <person name="Hitz B.C."/>
            <person name="Karra K."/>
            <person name="Nash R.S."/>
            <person name="Weng S."/>
            <person name="Wong E.D."/>
            <person name="Lloyd P."/>
            <person name="Skrzypek M.S."/>
            <person name="Miyasato S.R."/>
            <person name="Simison M."/>
            <person name="Cherry J.M."/>
        </authorList>
    </citation>
    <scope>GENOME REANNOTATION</scope>
    <source>
        <strain>ATCC 204508 / S288c</strain>
    </source>
</reference>
<reference key="4">
    <citation type="journal article" date="2003" name="Nature">
        <title>Global analysis of protein expression in yeast.</title>
        <authorList>
            <person name="Ghaemmaghami S."/>
            <person name="Huh W.-K."/>
            <person name="Bower K."/>
            <person name="Howson R.W."/>
            <person name="Belle A."/>
            <person name="Dephoure N."/>
            <person name="O'Shea E.K."/>
            <person name="Weissman J.S."/>
        </authorList>
    </citation>
    <scope>LEVEL OF PROTEIN EXPRESSION [LARGE SCALE ANALYSIS]</scope>
</reference>
<reference key="5">
    <citation type="journal article" date="2003" name="Cell">
        <title>Structural basis for the function of the beta subunit of the eukaryotic signal recognition particle receptor.</title>
        <authorList>
            <person name="Schwartz T."/>
            <person name="Blobel G."/>
        </authorList>
    </citation>
    <scope>X-RAY CRYSTALLOGRAPHY (1.7 ANGSTROMS) OF 27-244 IN COMPLEX WITH GTP AND SRP101</scope>
    <scope>SUBUNIT</scope>
</reference>
<name>SRPB_YEAST</name>
<accession>P36057</accession>
<accession>D6VX44</accession>
<proteinExistence type="evidence at protein level"/>
<gene>
    <name type="primary">SRP102</name>
    <name type="ordered locus">YKL154W</name>
    <name type="ORF">YKL609</name>
</gene>
<comment type="function">
    <text evidence="2">Component of the signal recognition particle (SRP) complex receptor (SR) (By similarity). Ensures, in conjunction with the SRP complex, the correct targeting of the nascent secretory proteins to the endoplasmic reticulum membrane system (By similarity). May mediate the membrane association of SR (By similarity).</text>
</comment>
<comment type="subunit">
    <text evidence="4">Heterodimer of an alpha and a beta chain.</text>
</comment>
<comment type="interaction">
    <interactant intactId="EBI-18091">
        <id>P36057</id>
    </interactant>
    <interactant intactId="EBI-18098">
        <id>P32916</id>
        <label>SRP101</label>
    </interactant>
    <organismsDiffer>false</organismsDiffer>
    <experiments>6</experiments>
</comment>
<comment type="interaction">
    <interactant intactId="EBI-18091">
        <id>P36057</id>
    </interactant>
    <interactant intactId="EBI-18091">
        <id>P36057</id>
        <label>SRP102</label>
    </interactant>
    <organismsDiffer>false</organismsDiffer>
    <experiments>2</experiments>
</comment>
<comment type="subcellular location">
    <subcellularLocation>
        <location evidence="1">Endoplasmic reticulum membrane</location>
        <topology evidence="3">Single-pass membrane protein</topology>
    </subcellularLocation>
</comment>
<comment type="miscellaneous">
    <text evidence="5">Present with 8250 molecules/cell in log phase SD medium.</text>
</comment>
<comment type="similarity">
    <text evidence="6">Belongs to the SRP receptor beta subunit family.</text>
</comment>
<comment type="sequence caution" evidence="6">
    <conflict type="erroneous initiation">
        <sequence resource="EMBL-CDS" id="CAA81499"/>
    </conflict>
</comment>
<dbReference type="EMBL" id="Z26877">
    <property type="protein sequence ID" value="CAA81499.1"/>
    <property type="status" value="ALT_INIT"/>
    <property type="molecule type" value="Genomic_DNA"/>
</dbReference>
<dbReference type="EMBL" id="Z28154">
    <property type="protein sequence ID" value="CAA81995.1"/>
    <property type="molecule type" value="Genomic_DNA"/>
</dbReference>
<dbReference type="EMBL" id="BK006944">
    <property type="protein sequence ID" value="DAA09010.1"/>
    <property type="molecule type" value="Genomic_DNA"/>
</dbReference>
<dbReference type="PIR" id="S37984">
    <property type="entry name" value="S37984"/>
</dbReference>
<dbReference type="RefSeq" id="NP_012768.1">
    <property type="nucleotide sequence ID" value="NM_001179720.1"/>
</dbReference>
<dbReference type="PDB" id="1NRJ">
    <property type="method" value="X-ray"/>
    <property type="resolution" value="1.70 A"/>
    <property type="chains" value="B=31-244"/>
</dbReference>
<dbReference type="PDB" id="2GED">
    <property type="method" value="X-ray"/>
    <property type="resolution" value="2.20 A"/>
    <property type="chains" value="A/B=36-183"/>
</dbReference>
<dbReference type="PDBsum" id="1NRJ"/>
<dbReference type="PDBsum" id="2GED"/>
<dbReference type="SMR" id="P36057"/>
<dbReference type="BioGRID" id="33983">
    <property type="interactions" value="433"/>
</dbReference>
<dbReference type="ComplexPortal" id="CPX-780">
    <property type="entry name" value="Signal recognition particle receptor complex"/>
</dbReference>
<dbReference type="DIP" id="DIP-4753N"/>
<dbReference type="FunCoup" id="P36057">
    <property type="interactions" value="757"/>
</dbReference>
<dbReference type="IntAct" id="P36057">
    <property type="interactions" value="21"/>
</dbReference>
<dbReference type="MINT" id="P36057"/>
<dbReference type="STRING" id="4932.YKL154W"/>
<dbReference type="TCDB" id="3.A.5.8.1">
    <property type="family name" value="the general secretory pathway (sec) family"/>
</dbReference>
<dbReference type="iPTMnet" id="P36057"/>
<dbReference type="PaxDb" id="4932-YKL154W"/>
<dbReference type="PeptideAtlas" id="P36057"/>
<dbReference type="EnsemblFungi" id="YKL154W_mRNA">
    <property type="protein sequence ID" value="YKL154W"/>
    <property type="gene ID" value="YKL154W"/>
</dbReference>
<dbReference type="GeneID" id="853702"/>
<dbReference type="KEGG" id="sce:YKL154W"/>
<dbReference type="AGR" id="SGD:S000001637"/>
<dbReference type="SGD" id="S000001637">
    <property type="gene designation" value="SRP102"/>
</dbReference>
<dbReference type="VEuPathDB" id="FungiDB:YKL154W"/>
<dbReference type="eggNOG" id="KOG0090">
    <property type="taxonomic scope" value="Eukaryota"/>
</dbReference>
<dbReference type="GeneTree" id="ENSGT00940000167928"/>
<dbReference type="HOGENOM" id="CLU_091084_1_0_1"/>
<dbReference type="InParanoid" id="P36057"/>
<dbReference type="OMA" id="CWIDERA"/>
<dbReference type="OrthoDB" id="41266at2759"/>
<dbReference type="BioCyc" id="YEAST:G3O-31924-MONOMER"/>
<dbReference type="BioGRID-ORCS" id="853702">
    <property type="hits" value="0 hits in 10 CRISPR screens"/>
</dbReference>
<dbReference type="EvolutionaryTrace" id="P36057"/>
<dbReference type="PRO" id="PR:P36057"/>
<dbReference type="Proteomes" id="UP000002311">
    <property type="component" value="Chromosome XI"/>
</dbReference>
<dbReference type="RNAct" id="P36057">
    <property type="molecule type" value="protein"/>
</dbReference>
<dbReference type="GO" id="GO:0005789">
    <property type="term" value="C:endoplasmic reticulum membrane"/>
    <property type="evidence" value="ECO:0000314"/>
    <property type="project" value="SGD"/>
</dbReference>
<dbReference type="GO" id="GO:0016020">
    <property type="term" value="C:membrane"/>
    <property type="evidence" value="ECO:0000303"/>
    <property type="project" value="ComplexPortal"/>
</dbReference>
<dbReference type="GO" id="GO:0005785">
    <property type="term" value="C:signal recognition particle receptor complex"/>
    <property type="evidence" value="ECO:0000353"/>
    <property type="project" value="ComplexPortal"/>
</dbReference>
<dbReference type="GO" id="GO:0005525">
    <property type="term" value="F:GTP binding"/>
    <property type="evidence" value="ECO:0007669"/>
    <property type="project" value="UniProtKB-KW"/>
</dbReference>
<dbReference type="GO" id="GO:0042802">
    <property type="term" value="F:identical protein binding"/>
    <property type="evidence" value="ECO:0000353"/>
    <property type="project" value="IntAct"/>
</dbReference>
<dbReference type="GO" id="GO:0005047">
    <property type="term" value="F:signal recognition particle binding"/>
    <property type="evidence" value="ECO:0000315"/>
    <property type="project" value="SGD"/>
</dbReference>
<dbReference type="GO" id="GO:0045047">
    <property type="term" value="P:protein targeting to ER"/>
    <property type="evidence" value="ECO:0000315"/>
    <property type="project" value="SGD"/>
</dbReference>
<dbReference type="GO" id="GO:0006617">
    <property type="term" value="P:SRP-dependent cotranslational protein targeting to membrane, signal sequence recognition"/>
    <property type="evidence" value="ECO:0000303"/>
    <property type="project" value="ComplexPortal"/>
</dbReference>
<dbReference type="CDD" id="cd04105">
    <property type="entry name" value="SR_beta"/>
    <property type="match status" value="1"/>
</dbReference>
<dbReference type="Gene3D" id="3.40.50.300">
    <property type="entry name" value="P-loop containing nucleotide triphosphate hydrolases"/>
    <property type="match status" value="1"/>
</dbReference>
<dbReference type="InterPro" id="IPR027417">
    <property type="entry name" value="P-loop_NTPase"/>
</dbReference>
<dbReference type="InterPro" id="IPR019009">
    <property type="entry name" value="SRP_receptor_beta_su"/>
</dbReference>
<dbReference type="Pfam" id="PF09439">
    <property type="entry name" value="SRPRB"/>
    <property type="match status" value="1"/>
</dbReference>
<dbReference type="SUPFAM" id="SSF52540">
    <property type="entry name" value="P-loop containing nucleoside triphosphate hydrolases"/>
    <property type="match status" value="1"/>
</dbReference>
<evidence type="ECO:0000250" key="1">
    <source>
        <dbReference type="UniProtKB" id="O13950"/>
    </source>
</evidence>
<evidence type="ECO:0000250" key="2">
    <source>
        <dbReference type="UniProtKB" id="P47758"/>
    </source>
</evidence>
<evidence type="ECO:0000255" key="3"/>
<evidence type="ECO:0000269" key="4">
    <source>
    </source>
</evidence>
<evidence type="ECO:0000269" key="5">
    <source>
    </source>
</evidence>
<evidence type="ECO:0000305" key="6"/>
<evidence type="ECO:0007829" key="7">
    <source>
        <dbReference type="PDB" id="1NRJ"/>
    </source>
</evidence>
<protein>
    <recommendedName>
        <fullName>Signal recognition particle receptor subunit beta</fullName>
        <shortName>SR-beta</shortName>
    </recommendedName>
</protein>
<sequence>MLSNTLIIACLLVIGTTIALIAVQKASSKTGIKQKSYQPSIIIAGPQNSGKTSLLTLLTTDSVRPTVVSQEPLSAADYDGSGVTLVDFPGHVKLRYKLSDYLKTRAKFVKGLIFMVDSTVDPKKLTTTAEFLVDILSITESSCENGIDILIACNKSELFTARPPSKIKDALESEIQKVIERRKKSLNEVERKINEEDYAENTLDVLQSTDGFKFANLEASVVAFEGSINKRKISQWREWIDEKL</sequence>
<keyword id="KW-0002">3D-structure</keyword>
<keyword id="KW-0256">Endoplasmic reticulum</keyword>
<keyword id="KW-0342">GTP-binding</keyword>
<keyword id="KW-0472">Membrane</keyword>
<keyword id="KW-0547">Nucleotide-binding</keyword>
<keyword id="KW-0675">Receptor</keyword>
<keyword id="KW-1185">Reference proteome</keyword>
<keyword id="KW-0812">Transmembrane</keyword>
<keyword id="KW-1133">Transmembrane helix</keyword>